<sequence length="245" mass="27845">MGLVWRSRTSLVGQLIGLVRLVASFAAQLFYRPSDAVAEEYHKWYYGNLVWTKTTYMGINCWKSVSDMWNYQEILSELQPSLVIEFGTRYGGSAVYFANIMRQIGQPFKVLTVDNSHKALDPRARREPDVLFVESSSTDPAIAEQIQRLKNEYPGKIFAILDSDHSMNHVLAEMKLLRPLLSAGDYLVVEDSNINGHPVLPGFGPGPYEAIEAYEDEFPNDYKHDAERENKFGWTSAPNGFLIRN</sequence>
<keyword id="KW-0444">Lipid biosynthesis</keyword>
<keyword id="KW-0443">Lipid metabolism</keyword>
<keyword id="KW-0489">Methyltransferase</keyword>
<keyword id="KW-1185">Reference proteome</keyword>
<keyword id="KW-0732">Signal</keyword>
<keyword id="KW-0808">Transferase</keyword>
<feature type="signal peptide" evidence="2">
    <location>
        <begin position="1"/>
        <end position="38"/>
    </location>
</feature>
<feature type="chain" id="PRO_0000427980" description="Rhamnosyl O-methyltransferase">
    <location>
        <begin position="39"/>
        <end position="245"/>
    </location>
</feature>
<dbReference type="EC" id="2.1.1.-"/>
<dbReference type="EMBL" id="AE000516">
    <property type="protein sequence ID" value="AAK47361.1"/>
    <property type="molecule type" value="Genomic_DNA"/>
</dbReference>
<dbReference type="PIR" id="D70670">
    <property type="entry name" value="D70670"/>
</dbReference>
<dbReference type="RefSeq" id="WP_003414919.1">
    <property type="nucleotide sequence ID" value="NZ_KK341227.1"/>
</dbReference>
<dbReference type="SMR" id="P9WIM4"/>
<dbReference type="KEGG" id="mtc:MT3035"/>
<dbReference type="PATRIC" id="fig|83331.31.peg.3277"/>
<dbReference type="HOGENOM" id="CLU_063868_0_0_11"/>
<dbReference type="Proteomes" id="UP000001020">
    <property type="component" value="Chromosome"/>
</dbReference>
<dbReference type="GO" id="GO:0005886">
    <property type="term" value="C:plasma membrane"/>
    <property type="evidence" value="ECO:0007669"/>
    <property type="project" value="TreeGrafter"/>
</dbReference>
<dbReference type="GO" id="GO:0008168">
    <property type="term" value="F:methyltransferase activity"/>
    <property type="evidence" value="ECO:0007669"/>
    <property type="project" value="UniProtKB-KW"/>
</dbReference>
<dbReference type="GO" id="GO:0071770">
    <property type="term" value="P:DIM/DIP cell wall layer assembly"/>
    <property type="evidence" value="ECO:0007669"/>
    <property type="project" value="TreeGrafter"/>
</dbReference>
<dbReference type="GO" id="GO:0008610">
    <property type="term" value="P:lipid biosynthetic process"/>
    <property type="evidence" value="ECO:0007669"/>
    <property type="project" value="InterPro"/>
</dbReference>
<dbReference type="GO" id="GO:0032259">
    <property type="term" value="P:methylation"/>
    <property type="evidence" value="ECO:0007669"/>
    <property type="project" value="UniProtKB-KW"/>
</dbReference>
<dbReference type="Gene3D" id="3.40.50.150">
    <property type="entry name" value="Vaccinia Virus protein VP39"/>
    <property type="match status" value="1"/>
</dbReference>
<dbReference type="InterPro" id="IPR054932">
    <property type="entry name" value="RhmsylMtase"/>
</dbReference>
<dbReference type="InterPro" id="IPR007072">
    <property type="entry name" value="RNMT_CmcI"/>
</dbReference>
<dbReference type="InterPro" id="IPR029063">
    <property type="entry name" value="SAM-dependent_MTases_sf"/>
</dbReference>
<dbReference type="NCBIfam" id="NF045824">
    <property type="entry name" value="RhmsylMtase"/>
    <property type="match status" value="1"/>
</dbReference>
<dbReference type="PANTHER" id="PTHR40048">
    <property type="entry name" value="RHAMNOSYL O-METHYLTRANSFERASE"/>
    <property type="match status" value="1"/>
</dbReference>
<dbReference type="PANTHER" id="PTHR40048:SF1">
    <property type="entry name" value="RHAMNOSYL O-METHYLTRANSFERASE"/>
    <property type="match status" value="1"/>
</dbReference>
<dbReference type="Pfam" id="PF04989">
    <property type="entry name" value="RMNT_CmcI"/>
    <property type="match status" value="1"/>
</dbReference>
<dbReference type="SUPFAM" id="SSF53335">
    <property type="entry name" value="S-adenosyl-L-methionine-dependent methyltransferases"/>
    <property type="match status" value="1"/>
</dbReference>
<proteinExistence type="inferred from homology"/>
<name>RNMT_MYCTO</name>
<comment type="function">
    <text evidence="1">Catalyzes the O-methylation of the hydroxyl group located on C-2 of the first rhamnosyl residue linked to the phenolic group of glycosylated phenolphthiocerol dimycocerosates (PGL) and p-hydroxybenzoic acid derivatives (p-HBAD).</text>
</comment>
<comment type="similarity">
    <text evidence="3">Belongs to the rhamnosyl O-methyltransferase family.</text>
</comment>
<gene>
    <name type="ordered locus">MT3035</name>
</gene>
<evidence type="ECO:0000250" key="1"/>
<evidence type="ECO:0000255" key="2"/>
<evidence type="ECO:0000305" key="3"/>
<protein>
    <recommendedName>
        <fullName>Rhamnosyl O-methyltransferase</fullName>
        <ecNumber>2.1.1.-</ecNumber>
    </recommendedName>
</protein>
<organism>
    <name type="scientific">Mycobacterium tuberculosis (strain CDC 1551 / Oshkosh)</name>
    <dbReference type="NCBI Taxonomy" id="83331"/>
    <lineage>
        <taxon>Bacteria</taxon>
        <taxon>Bacillati</taxon>
        <taxon>Actinomycetota</taxon>
        <taxon>Actinomycetes</taxon>
        <taxon>Mycobacteriales</taxon>
        <taxon>Mycobacteriaceae</taxon>
        <taxon>Mycobacterium</taxon>
        <taxon>Mycobacterium tuberculosis complex</taxon>
    </lineage>
</organism>
<reference key="1">
    <citation type="journal article" date="2002" name="J. Bacteriol.">
        <title>Whole-genome comparison of Mycobacterium tuberculosis clinical and laboratory strains.</title>
        <authorList>
            <person name="Fleischmann R.D."/>
            <person name="Alland D."/>
            <person name="Eisen J.A."/>
            <person name="Carpenter L."/>
            <person name="White O."/>
            <person name="Peterson J.D."/>
            <person name="DeBoy R.T."/>
            <person name="Dodson R.J."/>
            <person name="Gwinn M.L."/>
            <person name="Haft D.H."/>
            <person name="Hickey E.K."/>
            <person name="Kolonay J.F."/>
            <person name="Nelson W.C."/>
            <person name="Umayam L.A."/>
            <person name="Ermolaeva M.D."/>
            <person name="Salzberg S.L."/>
            <person name="Delcher A."/>
            <person name="Utterback T.R."/>
            <person name="Weidman J.F."/>
            <person name="Khouri H.M."/>
            <person name="Gill J."/>
            <person name="Mikula A."/>
            <person name="Bishai W."/>
            <person name="Jacobs W.R. Jr."/>
            <person name="Venter J.C."/>
            <person name="Fraser C.M."/>
        </authorList>
    </citation>
    <scope>NUCLEOTIDE SEQUENCE [LARGE SCALE GENOMIC DNA]</scope>
    <source>
        <strain>CDC 1551 / Oshkosh</strain>
    </source>
</reference>
<accession>P9WIM4</accession>
<accession>L0TDW5</accession>
<accession>O08024</accession>
<accession>Q50457</accession>
<accession>Q798M6</accession>
<accession>Q7D6D0</accession>